<reference key="1">
    <citation type="submission" date="2006-12" db="EMBL/GenBank/DDBJ databases">
        <title>Complete sequence of Halorhodospira halophila SL1.</title>
        <authorList>
            <consortium name="US DOE Joint Genome Institute"/>
            <person name="Copeland A."/>
            <person name="Lucas S."/>
            <person name="Lapidus A."/>
            <person name="Barry K."/>
            <person name="Detter J.C."/>
            <person name="Glavina del Rio T."/>
            <person name="Hammon N."/>
            <person name="Israni S."/>
            <person name="Dalin E."/>
            <person name="Tice H."/>
            <person name="Pitluck S."/>
            <person name="Saunders E."/>
            <person name="Brettin T."/>
            <person name="Bruce D."/>
            <person name="Han C."/>
            <person name="Tapia R."/>
            <person name="Schmutz J."/>
            <person name="Larimer F."/>
            <person name="Land M."/>
            <person name="Hauser L."/>
            <person name="Kyrpides N."/>
            <person name="Mikhailova N."/>
            <person name="Hoff W."/>
            <person name="Richardson P."/>
        </authorList>
    </citation>
    <scope>NUCLEOTIDE SEQUENCE [LARGE SCALE GENOMIC DNA]</scope>
    <source>
        <strain>DSM 244 / SL1</strain>
    </source>
</reference>
<organism>
    <name type="scientific">Halorhodospira halophila (strain DSM 244 / SL1)</name>
    <name type="common">Ectothiorhodospira halophila (strain DSM 244 / SL1)</name>
    <dbReference type="NCBI Taxonomy" id="349124"/>
    <lineage>
        <taxon>Bacteria</taxon>
        <taxon>Pseudomonadati</taxon>
        <taxon>Pseudomonadota</taxon>
        <taxon>Gammaproteobacteria</taxon>
        <taxon>Chromatiales</taxon>
        <taxon>Ectothiorhodospiraceae</taxon>
        <taxon>Halorhodospira</taxon>
    </lineage>
</organism>
<dbReference type="EC" id="6.1.1.7" evidence="1"/>
<dbReference type="EMBL" id="CP000544">
    <property type="protein sequence ID" value="ABM62417.1"/>
    <property type="molecule type" value="Genomic_DNA"/>
</dbReference>
<dbReference type="RefSeq" id="WP_011814439.1">
    <property type="nucleotide sequence ID" value="NC_008789.1"/>
</dbReference>
<dbReference type="SMR" id="A1WXK5"/>
<dbReference type="STRING" id="349124.Hhal_1653"/>
<dbReference type="KEGG" id="hha:Hhal_1653"/>
<dbReference type="eggNOG" id="COG0013">
    <property type="taxonomic scope" value="Bacteria"/>
</dbReference>
<dbReference type="HOGENOM" id="CLU_004485_1_1_6"/>
<dbReference type="OrthoDB" id="9803884at2"/>
<dbReference type="Proteomes" id="UP000000647">
    <property type="component" value="Chromosome"/>
</dbReference>
<dbReference type="GO" id="GO:0005829">
    <property type="term" value="C:cytosol"/>
    <property type="evidence" value="ECO:0007669"/>
    <property type="project" value="TreeGrafter"/>
</dbReference>
<dbReference type="GO" id="GO:0004813">
    <property type="term" value="F:alanine-tRNA ligase activity"/>
    <property type="evidence" value="ECO:0007669"/>
    <property type="project" value="UniProtKB-UniRule"/>
</dbReference>
<dbReference type="GO" id="GO:0002161">
    <property type="term" value="F:aminoacyl-tRNA deacylase activity"/>
    <property type="evidence" value="ECO:0007669"/>
    <property type="project" value="TreeGrafter"/>
</dbReference>
<dbReference type="GO" id="GO:0005524">
    <property type="term" value="F:ATP binding"/>
    <property type="evidence" value="ECO:0007669"/>
    <property type="project" value="UniProtKB-UniRule"/>
</dbReference>
<dbReference type="GO" id="GO:0000049">
    <property type="term" value="F:tRNA binding"/>
    <property type="evidence" value="ECO:0007669"/>
    <property type="project" value="UniProtKB-KW"/>
</dbReference>
<dbReference type="GO" id="GO:0008270">
    <property type="term" value="F:zinc ion binding"/>
    <property type="evidence" value="ECO:0007669"/>
    <property type="project" value="UniProtKB-UniRule"/>
</dbReference>
<dbReference type="GO" id="GO:0006419">
    <property type="term" value="P:alanyl-tRNA aminoacylation"/>
    <property type="evidence" value="ECO:0007669"/>
    <property type="project" value="UniProtKB-UniRule"/>
</dbReference>
<dbReference type="GO" id="GO:0045892">
    <property type="term" value="P:negative regulation of DNA-templated transcription"/>
    <property type="evidence" value="ECO:0007669"/>
    <property type="project" value="TreeGrafter"/>
</dbReference>
<dbReference type="CDD" id="cd00673">
    <property type="entry name" value="AlaRS_core"/>
    <property type="match status" value="1"/>
</dbReference>
<dbReference type="FunFam" id="2.40.30.130:FF:000001">
    <property type="entry name" value="Alanine--tRNA ligase"/>
    <property type="match status" value="1"/>
</dbReference>
<dbReference type="FunFam" id="3.10.310.40:FF:000001">
    <property type="entry name" value="Alanine--tRNA ligase"/>
    <property type="match status" value="1"/>
</dbReference>
<dbReference type="FunFam" id="3.30.54.20:FF:000001">
    <property type="entry name" value="Alanine--tRNA ligase"/>
    <property type="match status" value="1"/>
</dbReference>
<dbReference type="FunFam" id="3.30.930.10:FF:000004">
    <property type="entry name" value="Alanine--tRNA ligase"/>
    <property type="match status" value="1"/>
</dbReference>
<dbReference type="FunFam" id="3.30.980.10:FF:000004">
    <property type="entry name" value="Alanine--tRNA ligase, cytoplasmic"/>
    <property type="match status" value="1"/>
</dbReference>
<dbReference type="Gene3D" id="2.40.30.130">
    <property type="match status" value="1"/>
</dbReference>
<dbReference type="Gene3D" id="3.10.310.40">
    <property type="match status" value="1"/>
</dbReference>
<dbReference type="Gene3D" id="3.30.54.20">
    <property type="match status" value="1"/>
</dbReference>
<dbReference type="Gene3D" id="6.10.250.550">
    <property type="match status" value="1"/>
</dbReference>
<dbReference type="Gene3D" id="3.30.930.10">
    <property type="entry name" value="Bira Bifunctional Protein, Domain 2"/>
    <property type="match status" value="1"/>
</dbReference>
<dbReference type="Gene3D" id="3.30.980.10">
    <property type="entry name" value="Threonyl-trna Synthetase, Chain A, domain 2"/>
    <property type="match status" value="1"/>
</dbReference>
<dbReference type="HAMAP" id="MF_00036_B">
    <property type="entry name" value="Ala_tRNA_synth_B"/>
    <property type="match status" value="1"/>
</dbReference>
<dbReference type="InterPro" id="IPR045864">
    <property type="entry name" value="aa-tRNA-synth_II/BPL/LPL"/>
</dbReference>
<dbReference type="InterPro" id="IPR002318">
    <property type="entry name" value="Ala-tRNA-lgiase_IIc"/>
</dbReference>
<dbReference type="InterPro" id="IPR018162">
    <property type="entry name" value="Ala-tRNA-ligase_IIc_anticod-bd"/>
</dbReference>
<dbReference type="InterPro" id="IPR018165">
    <property type="entry name" value="Ala-tRNA-synth_IIc_core"/>
</dbReference>
<dbReference type="InterPro" id="IPR018164">
    <property type="entry name" value="Ala-tRNA-synth_IIc_N"/>
</dbReference>
<dbReference type="InterPro" id="IPR050058">
    <property type="entry name" value="Ala-tRNA_ligase"/>
</dbReference>
<dbReference type="InterPro" id="IPR023033">
    <property type="entry name" value="Ala_tRNA_ligase_euk/bac"/>
</dbReference>
<dbReference type="InterPro" id="IPR003156">
    <property type="entry name" value="DHHA1_dom"/>
</dbReference>
<dbReference type="InterPro" id="IPR018163">
    <property type="entry name" value="Thr/Ala-tRNA-synth_IIc_edit"/>
</dbReference>
<dbReference type="InterPro" id="IPR009000">
    <property type="entry name" value="Transl_B-barrel_sf"/>
</dbReference>
<dbReference type="InterPro" id="IPR012947">
    <property type="entry name" value="tRNA_SAD"/>
</dbReference>
<dbReference type="NCBIfam" id="TIGR00344">
    <property type="entry name" value="alaS"/>
    <property type="match status" value="1"/>
</dbReference>
<dbReference type="PANTHER" id="PTHR11777:SF9">
    <property type="entry name" value="ALANINE--TRNA LIGASE, CYTOPLASMIC"/>
    <property type="match status" value="1"/>
</dbReference>
<dbReference type="PANTHER" id="PTHR11777">
    <property type="entry name" value="ALANYL-TRNA SYNTHETASE"/>
    <property type="match status" value="1"/>
</dbReference>
<dbReference type="Pfam" id="PF02272">
    <property type="entry name" value="DHHA1"/>
    <property type="match status" value="1"/>
</dbReference>
<dbReference type="Pfam" id="PF01411">
    <property type="entry name" value="tRNA-synt_2c"/>
    <property type="match status" value="1"/>
</dbReference>
<dbReference type="Pfam" id="PF07973">
    <property type="entry name" value="tRNA_SAD"/>
    <property type="match status" value="1"/>
</dbReference>
<dbReference type="PRINTS" id="PR00980">
    <property type="entry name" value="TRNASYNTHALA"/>
</dbReference>
<dbReference type="SMART" id="SM00863">
    <property type="entry name" value="tRNA_SAD"/>
    <property type="match status" value="1"/>
</dbReference>
<dbReference type="SUPFAM" id="SSF55681">
    <property type="entry name" value="Class II aaRS and biotin synthetases"/>
    <property type="match status" value="1"/>
</dbReference>
<dbReference type="SUPFAM" id="SSF101353">
    <property type="entry name" value="Putative anticodon-binding domain of alanyl-tRNA synthetase (AlaRS)"/>
    <property type="match status" value="1"/>
</dbReference>
<dbReference type="SUPFAM" id="SSF55186">
    <property type="entry name" value="ThrRS/AlaRS common domain"/>
    <property type="match status" value="1"/>
</dbReference>
<dbReference type="SUPFAM" id="SSF50447">
    <property type="entry name" value="Translation proteins"/>
    <property type="match status" value="1"/>
</dbReference>
<dbReference type="PROSITE" id="PS50860">
    <property type="entry name" value="AA_TRNA_LIGASE_II_ALA"/>
    <property type="match status" value="1"/>
</dbReference>
<sequence length="863" mass="95203">MTSAQLRAAFLDFFRERGHEVVPSSPLVPANDPTLLFTNAGMVPFKEVFLGREQRGYQRATSSQRCVRAGGKHNDLENVGYTARHHTFFEMLGNFSFGDYFKRDAIRYAWSFLTEVVELPPERLWVTVYEDDDEAAQIWLEEIGVDPARFRRIGAHDNFWSMGDTGPCGPCSEVFYDHGPEVPGGPPGSDEEDGDRYIEVWNLVFMQYDRDAEGNLNPLPSPSIDTGMGLERLAAVLQGVHDNFETDLFTPLIDAAGEIAGVSDRRKPSLKVVADHIRACSFLIVDGVLPSTEGRGYVLRRIIRRAVRHGYQLGIDEPFFYRLVDPLDAVMGEAFPELRDRREFVEKILFQEEKRFRETLEDGLALLDEYLGGNDSGVIDGEVVFKLYDTHGFPVDLTADIARERNLEVDYQGFEARMAEQRERARAASRFGGAREEVVDAGESRFTGYETLEDVGSVIGLYQDGRSVQRLQPGEEGMVVLDRTPFYAESGGQVGDRGEILANGLRFRVADTVKQGEAHGHLGRLESGELGVGDQVTARVDRGTREATVRNHSATHLLHAALREILGDHVQQKGSLVAPDRLRFDFSHYEAPSREDLERIEARVNQEILTNHPVEAAHMAYEEAVQVGAMALFGEKYGDTVRVISLGDYSQELCGGTHAARTGDIGLFKIIDETGVAGGVRRIEAITGERAIGWVQEAEGRLNRLADLLRVGPDNLVMKVEQLSERTREQEKEIERLKQKLATQAGRSLLDDAGEVAGVRFLATCVEGGGKGLRDTLDQLKNQLGSGVIVLAAVQGEKVQLVAGVTKDLTDRLAAGDLVNHVAAQVGGRGGGRADFAQAGGKDPSHVNDALASVEAWIKDNLT</sequence>
<keyword id="KW-0030">Aminoacyl-tRNA synthetase</keyword>
<keyword id="KW-0067">ATP-binding</keyword>
<keyword id="KW-0963">Cytoplasm</keyword>
<keyword id="KW-0436">Ligase</keyword>
<keyword id="KW-0479">Metal-binding</keyword>
<keyword id="KW-0547">Nucleotide-binding</keyword>
<keyword id="KW-0648">Protein biosynthesis</keyword>
<keyword id="KW-1185">Reference proteome</keyword>
<keyword id="KW-0694">RNA-binding</keyword>
<keyword id="KW-0820">tRNA-binding</keyword>
<keyword id="KW-0862">Zinc</keyword>
<name>SYA_HALHL</name>
<feature type="chain" id="PRO_0000347630" description="Alanine--tRNA ligase">
    <location>
        <begin position="1"/>
        <end position="863"/>
    </location>
</feature>
<feature type="binding site" evidence="1">
    <location>
        <position position="552"/>
    </location>
    <ligand>
        <name>Zn(2+)</name>
        <dbReference type="ChEBI" id="CHEBI:29105"/>
    </ligand>
</feature>
<feature type="binding site" evidence="1">
    <location>
        <position position="556"/>
    </location>
    <ligand>
        <name>Zn(2+)</name>
        <dbReference type="ChEBI" id="CHEBI:29105"/>
    </ligand>
</feature>
<feature type="binding site" evidence="1">
    <location>
        <position position="654"/>
    </location>
    <ligand>
        <name>Zn(2+)</name>
        <dbReference type="ChEBI" id="CHEBI:29105"/>
    </ligand>
</feature>
<feature type="binding site" evidence="1">
    <location>
        <position position="658"/>
    </location>
    <ligand>
        <name>Zn(2+)</name>
        <dbReference type="ChEBI" id="CHEBI:29105"/>
    </ligand>
</feature>
<gene>
    <name evidence="1" type="primary">alaS</name>
    <name type="ordered locus">Hhal_1653</name>
</gene>
<proteinExistence type="inferred from homology"/>
<protein>
    <recommendedName>
        <fullName evidence="1">Alanine--tRNA ligase</fullName>
        <ecNumber evidence="1">6.1.1.7</ecNumber>
    </recommendedName>
    <alternativeName>
        <fullName evidence="1">Alanyl-tRNA synthetase</fullName>
        <shortName evidence="1">AlaRS</shortName>
    </alternativeName>
</protein>
<comment type="function">
    <text evidence="1">Catalyzes the attachment of alanine to tRNA(Ala) in a two-step reaction: alanine is first activated by ATP to form Ala-AMP and then transferred to the acceptor end of tRNA(Ala). Also edits incorrectly charged Ser-tRNA(Ala) and Gly-tRNA(Ala) via its editing domain.</text>
</comment>
<comment type="catalytic activity">
    <reaction evidence="1">
        <text>tRNA(Ala) + L-alanine + ATP = L-alanyl-tRNA(Ala) + AMP + diphosphate</text>
        <dbReference type="Rhea" id="RHEA:12540"/>
        <dbReference type="Rhea" id="RHEA-COMP:9657"/>
        <dbReference type="Rhea" id="RHEA-COMP:9923"/>
        <dbReference type="ChEBI" id="CHEBI:30616"/>
        <dbReference type="ChEBI" id="CHEBI:33019"/>
        <dbReference type="ChEBI" id="CHEBI:57972"/>
        <dbReference type="ChEBI" id="CHEBI:78442"/>
        <dbReference type="ChEBI" id="CHEBI:78497"/>
        <dbReference type="ChEBI" id="CHEBI:456215"/>
        <dbReference type="EC" id="6.1.1.7"/>
    </reaction>
</comment>
<comment type="cofactor">
    <cofactor evidence="1">
        <name>Zn(2+)</name>
        <dbReference type="ChEBI" id="CHEBI:29105"/>
    </cofactor>
    <text evidence="1">Binds 1 zinc ion per subunit.</text>
</comment>
<comment type="subcellular location">
    <subcellularLocation>
        <location evidence="1">Cytoplasm</location>
    </subcellularLocation>
</comment>
<comment type="domain">
    <text evidence="1">Consists of three domains; the N-terminal catalytic domain, the editing domain and the C-terminal C-Ala domain. The editing domain removes incorrectly charged amino acids, while the C-Ala domain, along with tRNA(Ala), serves as a bridge to cooperatively bring together the editing and aminoacylation centers thus stimulating deacylation of misacylated tRNAs.</text>
</comment>
<comment type="similarity">
    <text evidence="1">Belongs to the class-II aminoacyl-tRNA synthetase family.</text>
</comment>
<evidence type="ECO:0000255" key="1">
    <source>
        <dbReference type="HAMAP-Rule" id="MF_00036"/>
    </source>
</evidence>
<accession>A1WXK5</accession>